<accession>O24994</accession>
<gene>
    <name evidence="1" type="primary">fabH</name>
    <name type="ordered locus">HP_0202</name>
</gene>
<comment type="function">
    <text evidence="1">Catalyzes the condensation reaction of fatty acid synthesis by the addition to an acyl acceptor of two carbons from malonyl-ACP. Catalyzes the first condensation reaction which initiates fatty acid synthesis and may therefore play a role in governing the total rate of fatty acid production. Possesses both acetoacetyl-ACP synthase and acetyl transacylase activities. Its substrate specificity determines the biosynthesis of branched-chain and/or straight-chain of fatty acids.</text>
</comment>
<comment type="catalytic activity">
    <reaction evidence="1">
        <text>malonyl-[ACP] + acetyl-CoA + H(+) = 3-oxobutanoyl-[ACP] + CO2 + CoA</text>
        <dbReference type="Rhea" id="RHEA:12080"/>
        <dbReference type="Rhea" id="RHEA-COMP:9623"/>
        <dbReference type="Rhea" id="RHEA-COMP:9625"/>
        <dbReference type="ChEBI" id="CHEBI:15378"/>
        <dbReference type="ChEBI" id="CHEBI:16526"/>
        <dbReference type="ChEBI" id="CHEBI:57287"/>
        <dbReference type="ChEBI" id="CHEBI:57288"/>
        <dbReference type="ChEBI" id="CHEBI:78449"/>
        <dbReference type="ChEBI" id="CHEBI:78450"/>
        <dbReference type="EC" id="2.3.1.180"/>
    </reaction>
</comment>
<comment type="pathway">
    <text evidence="1">Lipid metabolism; fatty acid biosynthesis.</text>
</comment>
<comment type="subunit">
    <text evidence="1">Homodimer.</text>
</comment>
<comment type="subcellular location">
    <subcellularLocation>
        <location evidence="1">Cytoplasm</location>
    </subcellularLocation>
</comment>
<comment type="domain">
    <text evidence="1">The last Arg residue of the ACP-binding site is essential for the weak association between ACP/AcpP and FabH.</text>
</comment>
<comment type="similarity">
    <text evidence="1">Belongs to the thiolase-like superfamily. FabH family.</text>
</comment>
<keyword id="KW-0012">Acyltransferase</keyword>
<keyword id="KW-0963">Cytoplasm</keyword>
<keyword id="KW-0275">Fatty acid biosynthesis</keyword>
<keyword id="KW-0276">Fatty acid metabolism</keyword>
<keyword id="KW-0444">Lipid biosynthesis</keyword>
<keyword id="KW-0443">Lipid metabolism</keyword>
<keyword id="KW-0511">Multifunctional enzyme</keyword>
<keyword id="KW-1185">Reference proteome</keyword>
<keyword id="KW-0808">Transferase</keyword>
<feature type="chain" id="PRO_0000110434" description="Beta-ketoacyl-[acyl-carrier-protein] synthase III">
    <location>
        <begin position="1"/>
        <end position="331"/>
    </location>
</feature>
<feature type="region of interest" description="ACP-binding" evidence="1">
    <location>
        <begin position="256"/>
        <end position="260"/>
    </location>
</feature>
<feature type="active site" evidence="1">
    <location>
        <position position="115"/>
    </location>
</feature>
<feature type="active site" evidence="1">
    <location>
        <position position="255"/>
    </location>
</feature>
<feature type="active site" evidence="1">
    <location>
        <position position="285"/>
    </location>
</feature>
<name>FABH_HELPY</name>
<evidence type="ECO:0000255" key="1">
    <source>
        <dbReference type="HAMAP-Rule" id="MF_01815"/>
    </source>
</evidence>
<protein>
    <recommendedName>
        <fullName evidence="1">Beta-ketoacyl-[acyl-carrier-protein] synthase III</fullName>
        <shortName evidence="1">Beta-ketoacyl-ACP synthase III</shortName>
        <shortName evidence="1">KAS III</shortName>
        <ecNumber evidence="1">2.3.1.180</ecNumber>
    </recommendedName>
    <alternativeName>
        <fullName evidence="1">3-oxoacyl-[acyl-carrier-protein] synthase 3</fullName>
    </alternativeName>
    <alternativeName>
        <fullName evidence="1">3-oxoacyl-[acyl-carrier-protein] synthase III</fullName>
    </alternativeName>
</protein>
<proteinExistence type="inferred from homology"/>
<dbReference type="EC" id="2.3.1.180" evidence="1"/>
<dbReference type="EMBL" id="AE000511">
    <property type="protein sequence ID" value="AAD07270.1"/>
    <property type="molecule type" value="Genomic_DNA"/>
</dbReference>
<dbReference type="PIR" id="B64545">
    <property type="entry name" value="B64545"/>
</dbReference>
<dbReference type="RefSeq" id="NP_207001.1">
    <property type="nucleotide sequence ID" value="NC_000915.1"/>
</dbReference>
<dbReference type="RefSeq" id="WP_000397786.1">
    <property type="nucleotide sequence ID" value="NC_018939.1"/>
</dbReference>
<dbReference type="SMR" id="O24994"/>
<dbReference type="FunCoup" id="O24994">
    <property type="interactions" value="362"/>
</dbReference>
<dbReference type="IntAct" id="O24994">
    <property type="interactions" value="1"/>
</dbReference>
<dbReference type="MINT" id="O24994"/>
<dbReference type="STRING" id="85962.HP_0202"/>
<dbReference type="PaxDb" id="85962-C694_01005"/>
<dbReference type="EnsemblBacteria" id="AAD07270">
    <property type="protein sequence ID" value="AAD07270"/>
    <property type="gene ID" value="HP_0202"/>
</dbReference>
<dbReference type="KEGG" id="heo:C694_01005"/>
<dbReference type="KEGG" id="hpy:HP_0202"/>
<dbReference type="PATRIC" id="fig|85962.47.peg.217"/>
<dbReference type="eggNOG" id="COG0332">
    <property type="taxonomic scope" value="Bacteria"/>
</dbReference>
<dbReference type="InParanoid" id="O24994"/>
<dbReference type="OrthoDB" id="9815506at2"/>
<dbReference type="PhylomeDB" id="O24994"/>
<dbReference type="UniPathway" id="UPA00094"/>
<dbReference type="Proteomes" id="UP000000429">
    <property type="component" value="Chromosome"/>
</dbReference>
<dbReference type="GO" id="GO:0005737">
    <property type="term" value="C:cytoplasm"/>
    <property type="evidence" value="ECO:0007669"/>
    <property type="project" value="UniProtKB-SubCell"/>
</dbReference>
<dbReference type="GO" id="GO:0004315">
    <property type="term" value="F:3-oxoacyl-[acyl-carrier-protein] synthase activity"/>
    <property type="evidence" value="ECO:0007669"/>
    <property type="project" value="InterPro"/>
</dbReference>
<dbReference type="GO" id="GO:0033818">
    <property type="term" value="F:beta-ketoacyl-acyl-carrier-protein synthase III activity"/>
    <property type="evidence" value="ECO:0007669"/>
    <property type="project" value="UniProtKB-UniRule"/>
</dbReference>
<dbReference type="GO" id="GO:0006633">
    <property type="term" value="P:fatty acid biosynthetic process"/>
    <property type="evidence" value="ECO:0007669"/>
    <property type="project" value="UniProtKB-UniRule"/>
</dbReference>
<dbReference type="CDD" id="cd00830">
    <property type="entry name" value="KAS_III"/>
    <property type="match status" value="1"/>
</dbReference>
<dbReference type="FunFam" id="3.40.47.10:FF:000004">
    <property type="entry name" value="3-oxoacyl-[acyl-carrier-protein] synthase 3"/>
    <property type="match status" value="1"/>
</dbReference>
<dbReference type="Gene3D" id="3.40.47.10">
    <property type="match status" value="1"/>
</dbReference>
<dbReference type="HAMAP" id="MF_01815">
    <property type="entry name" value="FabH"/>
    <property type="match status" value="1"/>
</dbReference>
<dbReference type="InterPro" id="IPR013747">
    <property type="entry name" value="ACP_syn_III_C"/>
</dbReference>
<dbReference type="InterPro" id="IPR013751">
    <property type="entry name" value="ACP_syn_III_N"/>
</dbReference>
<dbReference type="InterPro" id="IPR004655">
    <property type="entry name" value="FabH"/>
</dbReference>
<dbReference type="InterPro" id="IPR016039">
    <property type="entry name" value="Thiolase-like"/>
</dbReference>
<dbReference type="NCBIfam" id="TIGR00747">
    <property type="entry name" value="fabH"/>
    <property type="match status" value="1"/>
</dbReference>
<dbReference type="NCBIfam" id="NF006829">
    <property type="entry name" value="PRK09352.1"/>
    <property type="match status" value="1"/>
</dbReference>
<dbReference type="PANTHER" id="PTHR34069">
    <property type="entry name" value="3-OXOACYL-[ACYL-CARRIER-PROTEIN] SYNTHASE 3"/>
    <property type="match status" value="1"/>
</dbReference>
<dbReference type="PANTHER" id="PTHR34069:SF2">
    <property type="entry name" value="BETA-KETOACYL-[ACYL-CARRIER-PROTEIN] SYNTHASE III"/>
    <property type="match status" value="1"/>
</dbReference>
<dbReference type="Pfam" id="PF08545">
    <property type="entry name" value="ACP_syn_III"/>
    <property type="match status" value="1"/>
</dbReference>
<dbReference type="Pfam" id="PF08541">
    <property type="entry name" value="ACP_syn_III_C"/>
    <property type="match status" value="1"/>
</dbReference>
<dbReference type="SUPFAM" id="SSF53901">
    <property type="entry name" value="Thiolase-like"/>
    <property type="match status" value="1"/>
</dbReference>
<sequence>MEFYASLKSIAMHVPSERVKNAEFQQFLDTSDEWIEKRTGIKERRFANDEEKSSDLGVIAAKQAIERAHLTPKDIDLVVVATLSPDFLAMPSTACVLSAKLGIENKPAFDISAACTGFIYLLSVAKAYVESGMYENVLIVGAEKTSSVLDFKDRGTCILFGDGAGACVIGRTKRLKESILDVQISANGNFSNYLYTPRTLKPTPFNAKEEASEPFLCMKGNEVFKLAVKTLLKDVEMILEKNALKPEDVRLFIPHQANFRIIQAVREHLDFKDEQVVLTVHKYGNTSAASIPMAMGEAYEEGRLKKGDLMLLDAFGGGLTWGSALVYFGGS</sequence>
<reference key="1">
    <citation type="journal article" date="1997" name="Nature">
        <title>The complete genome sequence of the gastric pathogen Helicobacter pylori.</title>
        <authorList>
            <person name="Tomb J.-F."/>
            <person name="White O."/>
            <person name="Kerlavage A.R."/>
            <person name="Clayton R.A."/>
            <person name="Sutton G.G."/>
            <person name="Fleischmann R.D."/>
            <person name="Ketchum K.A."/>
            <person name="Klenk H.-P."/>
            <person name="Gill S.R."/>
            <person name="Dougherty B.A."/>
            <person name="Nelson K.E."/>
            <person name="Quackenbush J."/>
            <person name="Zhou L."/>
            <person name="Kirkness E.F."/>
            <person name="Peterson S.N."/>
            <person name="Loftus B.J."/>
            <person name="Richardson D.L."/>
            <person name="Dodson R.J."/>
            <person name="Khalak H.G."/>
            <person name="Glodek A."/>
            <person name="McKenney K."/>
            <person name="FitzGerald L.M."/>
            <person name="Lee N."/>
            <person name="Adams M.D."/>
            <person name="Hickey E.K."/>
            <person name="Berg D.E."/>
            <person name="Gocayne J.D."/>
            <person name="Utterback T.R."/>
            <person name="Peterson J.D."/>
            <person name="Kelley J.M."/>
            <person name="Cotton M.D."/>
            <person name="Weidman J.F."/>
            <person name="Fujii C."/>
            <person name="Bowman C."/>
            <person name="Watthey L."/>
            <person name="Wallin E."/>
            <person name="Hayes W.S."/>
            <person name="Borodovsky M."/>
            <person name="Karp P.D."/>
            <person name="Smith H.O."/>
            <person name="Fraser C.M."/>
            <person name="Venter J.C."/>
        </authorList>
    </citation>
    <scope>NUCLEOTIDE SEQUENCE [LARGE SCALE GENOMIC DNA]</scope>
    <source>
        <strain>ATCC 700392 / 26695</strain>
    </source>
</reference>
<organism>
    <name type="scientific">Helicobacter pylori (strain ATCC 700392 / 26695)</name>
    <name type="common">Campylobacter pylori</name>
    <dbReference type="NCBI Taxonomy" id="85962"/>
    <lineage>
        <taxon>Bacteria</taxon>
        <taxon>Pseudomonadati</taxon>
        <taxon>Campylobacterota</taxon>
        <taxon>Epsilonproteobacteria</taxon>
        <taxon>Campylobacterales</taxon>
        <taxon>Helicobacteraceae</taxon>
        <taxon>Helicobacter</taxon>
    </lineage>
</organism>